<protein>
    <recommendedName>
        <fullName evidence="1">Adenylate kinase</fullName>
        <shortName evidence="1">AK</shortName>
        <ecNumber evidence="1">2.7.4.3</ecNumber>
    </recommendedName>
    <alternativeName>
        <fullName evidence="1">ATP-AMP transphosphorylase</fullName>
    </alternativeName>
    <alternativeName>
        <fullName evidence="1">ATP:AMP phosphotransferase</fullName>
    </alternativeName>
    <alternativeName>
        <fullName evidence="1">Adenylate monophosphate kinase</fullName>
    </alternativeName>
</protein>
<proteinExistence type="inferred from homology"/>
<comment type="function">
    <text evidence="1">Catalyzes the reversible transfer of the terminal phosphate group between ATP and AMP. Plays an important role in cellular energy homeostasis and in adenine nucleotide metabolism.</text>
</comment>
<comment type="catalytic activity">
    <reaction evidence="1">
        <text>AMP + ATP = 2 ADP</text>
        <dbReference type="Rhea" id="RHEA:12973"/>
        <dbReference type="ChEBI" id="CHEBI:30616"/>
        <dbReference type="ChEBI" id="CHEBI:456215"/>
        <dbReference type="ChEBI" id="CHEBI:456216"/>
        <dbReference type="EC" id="2.7.4.3"/>
    </reaction>
</comment>
<comment type="pathway">
    <text evidence="1">Purine metabolism; AMP biosynthesis via salvage pathway; AMP from ADP: step 1/1.</text>
</comment>
<comment type="subunit">
    <text evidence="1">Monomer.</text>
</comment>
<comment type="subcellular location">
    <subcellularLocation>
        <location evidence="1">Cytoplasm</location>
    </subcellularLocation>
</comment>
<comment type="domain">
    <text evidence="1">Consists of three domains, a large central CORE domain and two small peripheral domains, NMPbind and LID, which undergo movements during catalysis. The LID domain closes over the site of phosphoryl transfer upon ATP binding. Assembling and dissambling the active center during each catalytic cycle provides an effective means to prevent ATP hydrolysis.</text>
</comment>
<comment type="similarity">
    <text evidence="1">Belongs to the adenylate kinase family.</text>
</comment>
<evidence type="ECO:0000255" key="1">
    <source>
        <dbReference type="HAMAP-Rule" id="MF_00235"/>
    </source>
</evidence>
<reference key="1">
    <citation type="submission" date="2007-04" db="EMBL/GenBank/DDBJ databases">
        <title>Complete genome sequence of the nitrogen-fixing bacterium Azorhizobium caulinodans ORS571.</title>
        <authorList>
            <person name="Lee K.B."/>
            <person name="Backer P.D."/>
            <person name="Aono T."/>
            <person name="Liu C.T."/>
            <person name="Suzuki S."/>
            <person name="Suzuki T."/>
            <person name="Kaneko T."/>
            <person name="Yamada M."/>
            <person name="Tabata S."/>
            <person name="Kupfer D.M."/>
            <person name="Najar F.Z."/>
            <person name="Wiley G.B."/>
            <person name="Roe B."/>
            <person name="Binnewies T."/>
            <person name="Ussery D."/>
            <person name="Vereecke D."/>
            <person name="Gevers D."/>
            <person name="Holsters M."/>
            <person name="Oyaizu H."/>
        </authorList>
    </citation>
    <scope>NUCLEOTIDE SEQUENCE [LARGE SCALE GENOMIC DNA]</scope>
    <source>
        <strain>ATCC 43989 / DSM 5975 / JCM 20966 / LMG 6465 / NBRC 14845 / NCIMB 13405 / ORS 571</strain>
    </source>
</reference>
<sequence length="194" mass="20747">MRLVLLGPPGAGKGTQALRLVQRHGIVQLSTGDMLRAAVAAGTPVGLKAKAVMESGGLVSDEIVIGIIAERLDQPDARKGFILDGFPRTVAQADALDKLLADKGLKLDAVIELKVDQAKLLDRILNRAAEAKAKGEPVRKDDDPEVFKTRLEAYNRDTAVVAPYYSARGQLQQIDGMAPIEKVTQAIDSILETA</sequence>
<gene>
    <name evidence="1" type="primary">adk</name>
    <name type="ordered locus">AZC_2533</name>
</gene>
<organism>
    <name type="scientific">Azorhizobium caulinodans (strain ATCC 43989 / DSM 5975 / JCM 20966 / LMG 6465 / NBRC 14845 / NCIMB 13405 / ORS 571)</name>
    <dbReference type="NCBI Taxonomy" id="438753"/>
    <lineage>
        <taxon>Bacteria</taxon>
        <taxon>Pseudomonadati</taxon>
        <taxon>Pseudomonadota</taxon>
        <taxon>Alphaproteobacteria</taxon>
        <taxon>Hyphomicrobiales</taxon>
        <taxon>Xanthobacteraceae</taxon>
        <taxon>Azorhizobium</taxon>
    </lineage>
</organism>
<keyword id="KW-0067">ATP-binding</keyword>
<keyword id="KW-0963">Cytoplasm</keyword>
<keyword id="KW-0418">Kinase</keyword>
<keyword id="KW-0545">Nucleotide biosynthesis</keyword>
<keyword id="KW-0547">Nucleotide-binding</keyword>
<keyword id="KW-1185">Reference proteome</keyword>
<keyword id="KW-0808">Transferase</keyword>
<accession>A8IAP0</accession>
<feature type="chain" id="PRO_1000071794" description="Adenylate kinase">
    <location>
        <begin position="1"/>
        <end position="194"/>
    </location>
</feature>
<feature type="region of interest" description="NMP" evidence="1">
    <location>
        <begin position="30"/>
        <end position="59"/>
    </location>
</feature>
<feature type="region of interest" description="LID" evidence="1">
    <location>
        <begin position="126"/>
        <end position="142"/>
    </location>
</feature>
<feature type="binding site" evidence="1">
    <location>
        <begin position="10"/>
        <end position="15"/>
    </location>
    <ligand>
        <name>ATP</name>
        <dbReference type="ChEBI" id="CHEBI:30616"/>
    </ligand>
</feature>
<feature type="binding site" evidence="1">
    <location>
        <position position="31"/>
    </location>
    <ligand>
        <name>AMP</name>
        <dbReference type="ChEBI" id="CHEBI:456215"/>
    </ligand>
</feature>
<feature type="binding site" evidence="1">
    <location>
        <position position="36"/>
    </location>
    <ligand>
        <name>AMP</name>
        <dbReference type="ChEBI" id="CHEBI:456215"/>
    </ligand>
</feature>
<feature type="binding site" evidence="1">
    <location>
        <begin position="57"/>
        <end position="59"/>
    </location>
    <ligand>
        <name>AMP</name>
        <dbReference type="ChEBI" id="CHEBI:456215"/>
    </ligand>
</feature>
<feature type="binding site" evidence="1">
    <location>
        <begin position="85"/>
        <end position="88"/>
    </location>
    <ligand>
        <name>AMP</name>
        <dbReference type="ChEBI" id="CHEBI:456215"/>
    </ligand>
</feature>
<feature type="binding site" evidence="1">
    <location>
        <position position="92"/>
    </location>
    <ligand>
        <name>AMP</name>
        <dbReference type="ChEBI" id="CHEBI:456215"/>
    </ligand>
</feature>
<feature type="binding site" evidence="1">
    <location>
        <position position="127"/>
    </location>
    <ligand>
        <name>ATP</name>
        <dbReference type="ChEBI" id="CHEBI:30616"/>
    </ligand>
</feature>
<feature type="binding site" evidence="1">
    <location>
        <position position="139"/>
    </location>
    <ligand>
        <name>AMP</name>
        <dbReference type="ChEBI" id="CHEBI:456215"/>
    </ligand>
</feature>
<feature type="binding site" evidence="1">
    <location>
        <position position="150"/>
    </location>
    <ligand>
        <name>AMP</name>
        <dbReference type="ChEBI" id="CHEBI:456215"/>
    </ligand>
</feature>
<feature type="binding site" evidence="1">
    <location>
        <position position="178"/>
    </location>
    <ligand>
        <name>ATP</name>
        <dbReference type="ChEBI" id="CHEBI:30616"/>
    </ligand>
</feature>
<dbReference type="EC" id="2.7.4.3" evidence="1"/>
<dbReference type="EMBL" id="AP009384">
    <property type="protein sequence ID" value="BAF88531.1"/>
    <property type="molecule type" value="Genomic_DNA"/>
</dbReference>
<dbReference type="RefSeq" id="WP_012171059.1">
    <property type="nucleotide sequence ID" value="NC_009937.1"/>
</dbReference>
<dbReference type="SMR" id="A8IAP0"/>
<dbReference type="STRING" id="438753.AZC_2533"/>
<dbReference type="KEGG" id="azc:AZC_2533"/>
<dbReference type="eggNOG" id="COG0563">
    <property type="taxonomic scope" value="Bacteria"/>
</dbReference>
<dbReference type="HOGENOM" id="CLU_032354_4_1_5"/>
<dbReference type="UniPathway" id="UPA00588">
    <property type="reaction ID" value="UER00649"/>
</dbReference>
<dbReference type="Proteomes" id="UP000000270">
    <property type="component" value="Chromosome"/>
</dbReference>
<dbReference type="GO" id="GO:0005737">
    <property type="term" value="C:cytoplasm"/>
    <property type="evidence" value="ECO:0007669"/>
    <property type="project" value="UniProtKB-SubCell"/>
</dbReference>
<dbReference type="GO" id="GO:0004017">
    <property type="term" value="F:adenylate kinase activity"/>
    <property type="evidence" value="ECO:0007669"/>
    <property type="project" value="UniProtKB-UniRule"/>
</dbReference>
<dbReference type="GO" id="GO:0005524">
    <property type="term" value="F:ATP binding"/>
    <property type="evidence" value="ECO:0007669"/>
    <property type="project" value="UniProtKB-UniRule"/>
</dbReference>
<dbReference type="GO" id="GO:0044209">
    <property type="term" value="P:AMP salvage"/>
    <property type="evidence" value="ECO:0007669"/>
    <property type="project" value="UniProtKB-UniRule"/>
</dbReference>
<dbReference type="CDD" id="cd01428">
    <property type="entry name" value="ADK"/>
    <property type="match status" value="1"/>
</dbReference>
<dbReference type="Gene3D" id="3.40.50.300">
    <property type="entry name" value="P-loop containing nucleotide triphosphate hydrolases"/>
    <property type="match status" value="1"/>
</dbReference>
<dbReference type="HAMAP" id="MF_00235">
    <property type="entry name" value="Adenylate_kinase_Adk"/>
    <property type="match status" value="1"/>
</dbReference>
<dbReference type="InterPro" id="IPR006259">
    <property type="entry name" value="Adenyl_kin_sub"/>
</dbReference>
<dbReference type="InterPro" id="IPR000850">
    <property type="entry name" value="Adenylat/UMP-CMP_kin"/>
</dbReference>
<dbReference type="InterPro" id="IPR033690">
    <property type="entry name" value="Adenylat_kinase_CS"/>
</dbReference>
<dbReference type="InterPro" id="IPR027417">
    <property type="entry name" value="P-loop_NTPase"/>
</dbReference>
<dbReference type="NCBIfam" id="TIGR01351">
    <property type="entry name" value="adk"/>
    <property type="match status" value="1"/>
</dbReference>
<dbReference type="NCBIfam" id="NF001381">
    <property type="entry name" value="PRK00279.1-3"/>
    <property type="match status" value="1"/>
</dbReference>
<dbReference type="NCBIfam" id="NF011100">
    <property type="entry name" value="PRK14527.1"/>
    <property type="match status" value="1"/>
</dbReference>
<dbReference type="NCBIfam" id="NF011104">
    <property type="entry name" value="PRK14531.1"/>
    <property type="match status" value="1"/>
</dbReference>
<dbReference type="NCBIfam" id="NF011105">
    <property type="entry name" value="PRK14532.1"/>
    <property type="match status" value="1"/>
</dbReference>
<dbReference type="PANTHER" id="PTHR23359">
    <property type="entry name" value="NUCLEOTIDE KINASE"/>
    <property type="match status" value="1"/>
</dbReference>
<dbReference type="Pfam" id="PF00406">
    <property type="entry name" value="ADK"/>
    <property type="match status" value="1"/>
</dbReference>
<dbReference type="PRINTS" id="PR00094">
    <property type="entry name" value="ADENYLTKNASE"/>
</dbReference>
<dbReference type="SUPFAM" id="SSF52540">
    <property type="entry name" value="P-loop containing nucleoside triphosphate hydrolases"/>
    <property type="match status" value="1"/>
</dbReference>
<dbReference type="PROSITE" id="PS00113">
    <property type="entry name" value="ADENYLATE_KINASE"/>
    <property type="match status" value="1"/>
</dbReference>
<name>KAD_AZOC5</name>